<keyword id="KW-0186">Copper</keyword>
<keyword id="KW-0249">Electron transport</keyword>
<keyword id="KW-0460">Magnesium</keyword>
<keyword id="KW-0472">Membrane</keyword>
<keyword id="KW-0479">Metal-binding</keyword>
<keyword id="KW-0496">Mitochondrion</keyword>
<keyword id="KW-0999">Mitochondrion inner membrane</keyword>
<keyword id="KW-0679">Respiratory chain</keyword>
<keyword id="KW-1278">Translocase</keyword>
<keyword id="KW-0812">Transmembrane</keyword>
<keyword id="KW-1133">Transmembrane helix</keyword>
<keyword id="KW-0813">Transport</keyword>
<feature type="chain" id="PRO_0000183655" description="Cytochrome c oxidase subunit 2">
    <location>
        <begin position="1"/>
        <end position="229"/>
    </location>
</feature>
<feature type="topological domain" description="Mitochondrial intermembrane" evidence="3">
    <location>
        <begin position="1"/>
        <end position="14"/>
    </location>
</feature>
<feature type="transmembrane region" description="Helical; Name=I" evidence="3">
    <location>
        <begin position="15"/>
        <end position="45"/>
    </location>
</feature>
<feature type="topological domain" description="Mitochondrial matrix" evidence="3">
    <location>
        <begin position="46"/>
        <end position="59"/>
    </location>
</feature>
<feature type="transmembrane region" description="Helical; Name=II" evidence="3">
    <location>
        <begin position="60"/>
        <end position="87"/>
    </location>
</feature>
<feature type="topological domain" description="Mitochondrial intermembrane" evidence="3">
    <location>
        <begin position="88"/>
        <end position="229"/>
    </location>
</feature>
<feature type="binding site" evidence="3">
    <location>
        <position position="161"/>
    </location>
    <ligand>
        <name>Cu cation</name>
        <dbReference type="ChEBI" id="CHEBI:23378"/>
        <label>A1</label>
    </ligand>
</feature>
<feature type="binding site" evidence="3">
    <location>
        <position position="196"/>
    </location>
    <ligand>
        <name>Cu cation</name>
        <dbReference type="ChEBI" id="CHEBI:23378"/>
        <label>A1</label>
    </ligand>
</feature>
<feature type="binding site" evidence="3">
    <location>
        <position position="196"/>
    </location>
    <ligand>
        <name>Cu cation</name>
        <dbReference type="ChEBI" id="CHEBI:23378"/>
        <label>A2</label>
    </ligand>
</feature>
<feature type="binding site" evidence="3">
    <location>
        <position position="198"/>
    </location>
    <ligand>
        <name>Cu cation</name>
        <dbReference type="ChEBI" id="CHEBI:23378"/>
        <label>A2</label>
    </ligand>
</feature>
<feature type="binding site" evidence="3">
    <location>
        <position position="198"/>
    </location>
    <ligand>
        <name>Mg(2+)</name>
        <dbReference type="ChEBI" id="CHEBI:18420"/>
        <note>ligand shared with MT-CO1</note>
    </ligand>
</feature>
<feature type="binding site" evidence="3">
    <location>
        <position position="200"/>
    </location>
    <ligand>
        <name>Cu cation</name>
        <dbReference type="ChEBI" id="CHEBI:23378"/>
        <label>A1</label>
    </ligand>
</feature>
<feature type="binding site" evidence="3">
    <location>
        <position position="200"/>
    </location>
    <ligand>
        <name>Cu cation</name>
        <dbReference type="ChEBI" id="CHEBI:23378"/>
        <label>A2</label>
    </ligand>
</feature>
<feature type="binding site" evidence="3">
    <location>
        <position position="204"/>
    </location>
    <ligand>
        <name>Cu cation</name>
        <dbReference type="ChEBI" id="CHEBI:23378"/>
        <label>A2</label>
    </ligand>
</feature>
<feature type="binding site" evidence="3">
    <location>
        <position position="207"/>
    </location>
    <ligand>
        <name>Cu cation</name>
        <dbReference type="ChEBI" id="CHEBI:23378"/>
        <label>A1</label>
    </ligand>
</feature>
<comment type="function">
    <text evidence="2">Component of the cytochrome c oxidase, the last enzyme in the mitochondrial electron transport chain which drives oxidative phosphorylation. The respiratory chain contains 3 multisubunit complexes succinate dehydrogenase (complex II, CII), ubiquinol-cytochrome c oxidoreductase (cytochrome b-c1 complex, complex III, CIII) and cytochrome c oxidase (complex IV, CIV), that cooperate to transfer electrons derived from NADH and succinate to molecular oxygen, creating an electrochemical gradient over the inner membrane that drives transmembrane transport and the ATP synthase. Cytochrome c oxidase is the component of the respiratory chain that catalyzes the reduction of oxygen to water. Electrons originating from reduced cytochrome c in the intermembrane space (IMS) are transferred via the dinuclear copper A center (CU(A)) of subunit 2 and heme A of subunit 1 to the active site in subunit 1, a binuclear center (BNC) formed by heme A3 and copper B (CU(B)). The BNC reduces molecular oxygen to 2 water molecules using 4 electrons from cytochrome c in the IMS and 4 protons from the mitochondrial matrix.</text>
</comment>
<comment type="catalytic activity">
    <reaction evidence="2">
        <text>4 Fe(II)-[cytochrome c] + O2 + 8 H(+)(in) = 4 Fe(III)-[cytochrome c] + 2 H2O + 4 H(+)(out)</text>
        <dbReference type="Rhea" id="RHEA:11436"/>
        <dbReference type="Rhea" id="RHEA-COMP:10350"/>
        <dbReference type="Rhea" id="RHEA-COMP:14399"/>
        <dbReference type="ChEBI" id="CHEBI:15377"/>
        <dbReference type="ChEBI" id="CHEBI:15378"/>
        <dbReference type="ChEBI" id="CHEBI:15379"/>
        <dbReference type="ChEBI" id="CHEBI:29033"/>
        <dbReference type="ChEBI" id="CHEBI:29034"/>
        <dbReference type="EC" id="7.1.1.9"/>
    </reaction>
    <physiologicalReaction direction="left-to-right" evidence="2">
        <dbReference type="Rhea" id="RHEA:11437"/>
    </physiologicalReaction>
</comment>
<comment type="cofactor">
    <cofactor evidence="3">
        <name>Cu cation</name>
        <dbReference type="ChEBI" id="CHEBI:23378"/>
    </cofactor>
    <text evidence="3">Binds a dinuclear copper A center per subunit.</text>
</comment>
<comment type="subunit">
    <text evidence="1 3">Component of the cytochrome c oxidase (complex IV, CIV), a multisubunit enzyme composed of 14 subunits. The complex is composed of a catalytic core of 3 subunits MT-CO1, MT-CO2 and MT-CO3, encoded in the mitochondrial DNA, and 11 supernumerary subunits COX4I, COX5A, COX5B, COX6A, COX6B, COX6C, COX7A, COX7B, COX7C, COX8 and NDUFA4, which are encoded in the nuclear genome. The complex exists as a monomer or a dimer and forms supercomplexes (SCs) in the inner mitochondrial membrane with NADH-ubiquinone oxidoreductase (complex I, CI) and ubiquinol-cytochrome c oxidoreductase (cytochrome b-c1 complex, complex III, CIII), resulting in different assemblies (supercomplex SCI(1)III(2)IV(1) and megacomplex MCI(2)III(2)IV(2)) (By similarity). Found in a complex with TMEM177, COA6, COX18, COX20, SCO1 and SCO2. Interacts with TMEM177 in a COX20-dependent manner. Interacts with COX20. Interacts with COX16 (By similarity).</text>
</comment>
<comment type="subcellular location">
    <subcellularLocation>
        <location evidence="3">Mitochondrion inner membrane</location>
        <topology evidence="3">Multi-pass membrane protein</topology>
    </subcellularLocation>
</comment>
<comment type="similarity">
    <text evidence="4">Belongs to the cytochrome c oxidase subunit 2 family.</text>
</comment>
<dbReference type="EC" id="7.1.1.9"/>
<dbReference type="EMBL" id="AF039066">
    <property type="protein sequence ID" value="AAD05053.1"/>
    <property type="molecule type" value="Genomic_DNA"/>
</dbReference>
<dbReference type="PIR" id="T11104">
    <property type="entry name" value="T11104"/>
</dbReference>
<dbReference type="RefSeq" id="NP_008435.1">
    <property type="nucleotide sequence ID" value="NC_001947.1"/>
</dbReference>
<dbReference type="SMR" id="O79673"/>
<dbReference type="GeneID" id="808278"/>
<dbReference type="CTD" id="4513"/>
<dbReference type="GO" id="GO:0005743">
    <property type="term" value="C:mitochondrial inner membrane"/>
    <property type="evidence" value="ECO:0007669"/>
    <property type="project" value="UniProtKB-SubCell"/>
</dbReference>
<dbReference type="GO" id="GO:0045277">
    <property type="term" value="C:respiratory chain complex IV"/>
    <property type="evidence" value="ECO:0000250"/>
    <property type="project" value="UniProtKB"/>
</dbReference>
<dbReference type="GO" id="GO:0005507">
    <property type="term" value="F:copper ion binding"/>
    <property type="evidence" value="ECO:0007669"/>
    <property type="project" value="InterPro"/>
</dbReference>
<dbReference type="GO" id="GO:0004129">
    <property type="term" value="F:cytochrome-c oxidase activity"/>
    <property type="evidence" value="ECO:0007669"/>
    <property type="project" value="UniProtKB-EC"/>
</dbReference>
<dbReference type="GO" id="GO:0042773">
    <property type="term" value="P:ATP synthesis coupled electron transport"/>
    <property type="evidence" value="ECO:0007669"/>
    <property type="project" value="TreeGrafter"/>
</dbReference>
<dbReference type="CDD" id="cd13912">
    <property type="entry name" value="CcO_II_C"/>
    <property type="match status" value="1"/>
</dbReference>
<dbReference type="FunFam" id="1.10.287.90:FF:000001">
    <property type="entry name" value="Cytochrome c oxidase subunit 2"/>
    <property type="match status" value="1"/>
</dbReference>
<dbReference type="FunFam" id="2.60.40.420:FF:000001">
    <property type="entry name" value="Cytochrome c oxidase subunit 2"/>
    <property type="match status" value="1"/>
</dbReference>
<dbReference type="Gene3D" id="1.10.287.90">
    <property type="match status" value="1"/>
</dbReference>
<dbReference type="Gene3D" id="2.60.40.420">
    <property type="entry name" value="Cupredoxins - blue copper proteins"/>
    <property type="match status" value="1"/>
</dbReference>
<dbReference type="InterPro" id="IPR045187">
    <property type="entry name" value="CcO_II"/>
</dbReference>
<dbReference type="InterPro" id="IPR002429">
    <property type="entry name" value="CcO_II-like_C"/>
</dbReference>
<dbReference type="InterPro" id="IPR034210">
    <property type="entry name" value="CcO_II_C"/>
</dbReference>
<dbReference type="InterPro" id="IPR001505">
    <property type="entry name" value="Copper_CuA"/>
</dbReference>
<dbReference type="InterPro" id="IPR008972">
    <property type="entry name" value="Cupredoxin"/>
</dbReference>
<dbReference type="InterPro" id="IPR014222">
    <property type="entry name" value="Cyt_c_oxidase_su2"/>
</dbReference>
<dbReference type="InterPro" id="IPR011759">
    <property type="entry name" value="Cyt_c_oxidase_su2_TM_dom"/>
</dbReference>
<dbReference type="InterPro" id="IPR036257">
    <property type="entry name" value="Cyt_c_oxidase_su2_TM_sf"/>
</dbReference>
<dbReference type="NCBIfam" id="TIGR02866">
    <property type="entry name" value="CoxB"/>
    <property type="match status" value="1"/>
</dbReference>
<dbReference type="PANTHER" id="PTHR22888:SF9">
    <property type="entry name" value="CYTOCHROME C OXIDASE SUBUNIT 2"/>
    <property type="match status" value="1"/>
</dbReference>
<dbReference type="PANTHER" id="PTHR22888">
    <property type="entry name" value="CYTOCHROME C OXIDASE, SUBUNIT II"/>
    <property type="match status" value="1"/>
</dbReference>
<dbReference type="Pfam" id="PF00116">
    <property type="entry name" value="COX2"/>
    <property type="match status" value="1"/>
</dbReference>
<dbReference type="Pfam" id="PF02790">
    <property type="entry name" value="COX2_TM"/>
    <property type="match status" value="1"/>
</dbReference>
<dbReference type="PRINTS" id="PR01166">
    <property type="entry name" value="CYCOXIDASEII"/>
</dbReference>
<dbReference type="SUPFAM" id="SSF49503">
    <property type="entry name" value="Cupredoxins"/>
    <property type="match status" value="1"/>
</dbReference>
<dbReference type="SUPFAM" id="SSF81464">
    <property type="entry name" value="Cytochrome c oxidase subunit II-like, transmembrane region"/>
    <property type="match status" value="1"/>
</dbReference>
<dbReference type="PROSITE" id="PS00078">
    <property type="entry name" value="COX2"/>
    <property type="match status" value="1"/>
</dbReference>
<dbReference type="PROSITE" id="PS50857">
    <property type="entry name" value="COX2_CUA"/>
    <property type="match status" value="1"/>
</dbReference>
<dbReference type="PROSITE" id="PS50999">
    <property type="entry name" value="COX2_TM"/>
    <property type="match status" value="1"/>
</dbReference>
<name>COX2_PELSU</name>
<reference key="1">
    <citation type="journal article" date="1998" name="Proc. Natl. Acad. Sci. U.S.A.">
        <title>Complete mitochondrial genome suggests diapsid affinities of turtles.</title>
        <authorList>
            <person name="Zardoya R."/>
            <person name="Meyer A."/>
        </authorList>
    </citation>
    <scope>NUCLEOTIDE SEQUENCE [GENOMIC DNA]</scope>
</reference>
<sequence length="229" mass="26272">MPTPNQTNFQDAASPLMEELTHFHDHTLMIVFMISLLVLYILLSMLSTKLTHTNTANAQQAEMVWTILPAIILITIALPSLQILYMMDEINKPHMTIKAIGHQWYWTYEYTDYKELEFNSYMIQTQDLPLGHMRLLEVDHRMVTPLESYIRMLISADDVLHSWAIPSLGLKTDAVPGRINQAVFIIMQAGIFYGQCSEICGANHSFMPVVVESLPMNHFDLWLAMIDTL</sequence>
<proteinExistence type="inferred from homology"/>
<organism>
    <name type="scientific">Pelomedusa subrufa</name>
    <name type="common">African side-necked turtle</name>
    <dbReference type="NCBI Taxonomy" id="44522"/>
    <lineage>
        <taxon>Eukaryota</taxon>
        <taxon>Metazoa</taxon>
        <taxon>Chordata</taxon>
        <taxon>Craniata</taxon>
        <taxon>Vertebrata</taxon>
        <taxon>Euteleostomi</taxon>
        <taxon>Archelosauria</taxon>
        <taxon>Testudinata</taxon>
        <taxon>Testudines</taxon>
        <taxon>Pleurodira</taxon>
        <taxon>Pelomedusidae</taxon>
        <taxon>Pelomedusa</taxon>
    </lineage>
</organism>
<geneLocation type="mitochondrion"/>
<gene>
    <name type="primary">MT-CO2</name>
    <name type="synonym">COII</name>
    <name type="synonym">COXII</name>
    <name type="synonym">MTCO2</name>
</gene>
<evidence type="ECO:0000250" key="1">
    <source>
        <dbReference type="UniProtKB" id="P00403"/>
    </source>
</evidence>
<evidence type="ECO:0000250" key="2">
    <source>
        <dbReference type="UniProtKB" id="P00410"/>
    </source>
</evidence>
<evidence type="ECO:0000250" key="3">
    <source>
        <dbReference type="UniProtKB" id="P68530"/>
    </source>
</evidence>
<evidence type="ECO:0000305" key="4"/>
<protein>
    <recommendedName>
        <fullName>Cytochrome c oxidase subunit 2</fullName>
        <ecNumber>7.1.1.9</ecNumber>
    </recommendedName>
    <alternativeName>
        <fullName>Cytochrome c oxidase polypeptide II</fullName>
    </alternativeName>
</protein>
<accession>O79673</accession>